<evidence type="ECO:0000255" key="1">
    <source>
        <dbReference type="HAMAP-Rule" id="MF_00821"/>
    </source>
</evidence>
<keyword id="KW-0143">Chaperone</keyword>
<keyword id="KW-0963">Cytoplasm</keyword>
<keyword id="KW-0653">Protein transport</keyword>
<keyword id="KW-0811">Translocation</keyword>
<keyword id="KW-0813">Transport</keyword>
<organism>
    <name type="scientific">Burkholderia pseudomallei (strain 668)</name>
    <dbReference type="NCBI Taxonomy" id="320373"/>
    <lineage>
        <taxon>Bacteria</taxon>
        <taxon>Pseudomonadati</taxon>
        <taxon>Pseudomonadota</taxon>
        <taxon>Betaproteobacteria</taxon>
        <taxon>Burkholderiales</taxon>
        <taxon>Burkholderiaceae</taxon>
        <taxon>Burkholderia</taxon>
        <taxon>pseudomallei group</taxon>
    </lineage>
</organism>
<reference key="1">
    <citation type="journal article" date="2010" name="Genome Biol. Evol.">
        <title>Continuing evolution of Burkholderia mallei through genome reduction and large-scale rearrangements.</title>
        <authorList>
            <person name="Losada L."/>
            <person name="Ronning C.M."/>
            <person name="DeShazer D."/>
            <person name="Woods D."/>
            <person name="Fedorova N."/>
            <person name="Kim H.S."/>
            <person name="Shabalina S.A."/>
            <person name="Pearson T.R."/>
            <person name="Brinkac L."/>
            <person name="Tan P."/>
            <person name="Nandi T."/>
            <person name="Crabtree J."/>
            <person name="Badger J."/>
            <person name="Beckstrom-Sternberg S."/>
            <person name="Saqib M."/>
            <person name="Schutzer S.E."/>
            <person name="Keim P."/>
            <person name="Nierman W.C."/>
        </authorList>
    </citation>
    <scope>NUCLEOTIDE SEQUENCE [LARGE SCALE GENOMIC DNA]</scope>
    <source>
        <strain>668</strain>
    </source>
</reference>
<protein>
    <recommendedName>
        <fullName evidence="1">Protein-export protein SecB</fullName>
    </recommendedName>
</protein>
<sequence>MSDVENQPFFNIQRIYLKDLSLEQPNSPAIFLEQEMPAVEVEVDVKAERLAENVYEIVVAGTVTAKVREKVAFLVEAKQAGIFDIRNIPAEQIDPLCGIACPTILFPYLRSNIADSITRAGFPPIHLAEINFQALYEQRLAEISQQQQQGGAPNGTTLN</sequence>
<comment type="function">
    <text evidence="1">One of the proteins required for the normal export of preproteins out of the cell cytoplasm. It is a molecular chaperone that binds to a subset of precursor proteins, maintaining them in a translocation-competent state. It also specifically binds to its receptor SecA.</text>
</comment>
<comment type="subunit">
    <text evidence="1">Homotetramer, a dimer of dimers. One homotetramer interacts with 1 SecA dimer.</text>
</comment>
<comment type="subcellular location">
    <subcellularLocation>
        <location evidence="1">Cytoplasm</location>
    </subcellularLocation>
</comment>
<comment type="similarity">
    <text evidence="1">Belongs to the SecB family.</text>
</comment>
<proteinExistence type="inferred from homology"/>
<accession>A3N5B3</accession>
<gene>
    <name evidence="1" type="primary">secB</name>
    <name type="ordered locus">BURPS668_0481</name>
</gene>
<feature type="chain" id="PRO_1000062465" description="Protein-export protein SecB">
    <location>
        <begin position="1"/>
        <end position="159"/>
    </location>
</feature>
<dbReference type="EMBL" id="CP000570">
    <property type="protein sequence ID" value="ABN82782.1"/>
    <property type="molecule type" value="Genomic_DNA"/>
</dbReference>
<dbReference type="RefSeq" id="WP_004198004.1">
    <property type="nucleotide sequence ID" value="NC_009074.1"/>
</dbReference>
<dbReference type="SMR" id="A3N5B3"/>
<dbReference type="GeneID" id="93058964"/>
<dbReference type="KEGG" id="bpd:BURPS668_0481"/>
<dbReference type="HOGENOM" id="CLU_111574_1_0_4"/>
<dbReference type="GO" id="GO:0005737">
    <property type="term" value="C:cytoplasm"/>
    <property type="evidence" value="ECO:0007669"/>
    <property type="project" value="UniProtKB-SubCell"/>
</dbReference>
<dbReference type="GO" id="GO:0051082">
    <property type="term" value="F:unfolded protein binding"/>
    <property type="evidence" value="ECO:0007669"/>
    <property type="project" value="InterPro"/>
</dbReference>
<dbReference type="GO" id="GO:0006457">
    <property type="term" value="P:protein folding"/>
    <property type="evidence" value="ECO:0007669"/>
    <property type="project" value="UniProtKB-UniRule"/>
</dbReference>
<dbReference type="GO" id="GO:0051262">
    <property type="term" value="P:protein tetramerization"/>
    <property type="evidence" value="ECO:0007669"/>
    <property type="project" value="InterPro"/>
</dbReference>
<dbReference type="GO" id="GO:0015031">
    <property type="term" value="P:protein transport"/>
    <property type="evidence" value="ECO:0007669"/>
    <property type="project" value="UniProtKB-UniRule"/>
</dbReference>
<dbReference type="Gene3D" id="3.10.420.10">
    <property type="entry name" value="SecB-like"/>
    <property type="match status" value="1"/>
</dbReference>
<dbReference type="HAMAP" id="MF_00821">
    <property type="entry name" value="SecB"/>
    <property type="match status" value="1"/>
</dbReference>
<dbReference type="InterPro" id="IPR003708">
    <property type="entry name" value="SecB"/>
</dbReference>
<dbReference type="InterPro" id="IPR035958">
    <property type="entry name" value="SecB-like_sf"/>
</dbReference>
<dbReference type="NCBIfam" id="NF004392">
    <property type="entry name" value="PRK05751.1-3"/>
    <property type="match status" value="1"/>
</dbReference>
<dbReference type="NCBIfam" id="NF004394">
    <property type="entry name" value="PRK05751.1-5"/>
    <property type="match status" value="1"/>
</dbReference>
<dbReference type="NCBIfam" id="TIGR00809">
    <property type="entry name" value="secB"/>
    <property type="match status" value="1"/>
</dbReference>
<dbReference type="PANTHER" id="PTHR36918">
    <property type="match status" value="1"/>
</dbReference>
<dbReference type="PANTHER" id="PTHR36918:SF1">
    <property type="entry name" value="PROTEIN-EXPORT PROTEIN SECB"/>
    <property type="match status" value="1"/>
</dbReference>
<dbReference type="Pfam" id="PF02556">
    <property type="entry name" value="SecB"/>
    <property type="match status" value="1"/>
</dbReference>
<dbReference type="PRINTS" id="PR01594">
    <property type="entry name" value="SECBCHAPRONE"/>
</dbReference>
<dbReference type="SUPFAM" id="SSF54611">
    <property type="entry name" value="SecB-like"/>
    <property type="match status" value="1"/>
</dbReference>
<name>SECB_BURP6</name>